<proteinExistence type="inferred from homology"/>
<keyword id="KW-0175">Coiled coil</keyword>
<keyword id="KW-0574">Periplasm</keyword>
<keyword id="KW-1185">Reference proteome</keyword>
<keyword id="KW-0732">Signal</keyword>
<comment type="subcellular location">
    <subcellularLocation>
        <location evidence="1">Periplasm</location>
    </subcellularLocation>
</comment>
<comment type="similarity">
    <text evidence="1">Belongs to the UPF0194 family.</text>
</comment>
<comment type="sequence caution" evidence="2">
    <conflict type="erroneous initiation">
        <sequence resource="EMBL-CDS" id="BAB34296"/>
    </conflict>
    <text>Truncated N-terminus.</text>
</comment>
<gene>
    <name evidence="1" type="primary">ybhG</name>
    <name type="ordered locus">Z1015</name>
    <name type="ordered locus">ECs0873</name>
</gene>
<dbReference type="EMBL" id="AE005174">
    <property type="protein sequence ID" value="AAG55166.1"/>
    <property type="molecule type" value="Genomic_DNA"/>
</dbReference>
<dbReference type="EMBL" id="BA000007">
    <property type="protein sequence ID" value="BAB34296.2"/>
    <property type="status" value="ALT_INIT"/>
    <property type="molecule type" value="Genomic_DNA"/>
</dbReference>
<dbReference type="PIR" id="A99738">
    <property type="entry name" value="A99738"/>
</dbReference>
<dbReference type="PIR" id="B85588">
    <property type="entry name" value="B85588"/>
</dbReference>
<dbReference type="RefSeq" id="NP_308900.1">
    <property type="nucleotide sequence ID" value="NC_002695.1"/>
</dbReference>
<dbReference type="SMR" id="Q8X7Y9"/>
<dbReference type="STRING" id="155864.Z1015"/>
<dbReference type="GeneID" id="917611"/>
<dbReference type="KEGG" id="ece:Z1015"/>
<dbReference type="KEGG" id="ecs:ECs_0873"/>
<dbReference type="PATRIC" id="fig|386585.9.peg.987"/>
<dbReference type="eggNOG" id="COG0845">
    <property type="taxonomic scope" value="Bacteria"/>
</dbReference>
<dbReference type="HOGENOM" id="CLU_018816_6_3_6"/>
<dbReference type="OMA" id="MYLTDID"/>
<dbReference type="Proteomes" id="UP000000558">
    <property type="component" value="Chromosome"/>
</dbReference>
<dbReference type="Proteomes" id="UP000002519">
    <property type="component" value="Chromosome"/>
</dbReference>
<dbReference type="GO" id="GO:0042597">
    <property type="term" value="C:periplasmic space"/>
    <property type="evidence" value="ECO:0007669"/>
    <property type="project" value="UniProtKB-SubCell"/>
</dbReference>
<dbReference type="FunFam" id="1.10.287.470:FF:000004">
    <property type="entry name" value="UPF0194 membrane protein YbhG"/>
    <property type="match status" value="1"/>
</dbReference>
<dbReference type="FunFam" id="2.40.30.170:FF:000005">
    <property type="entry name" value="UPF0194 membrane protein YbhG"/>
    <property type="match status" value="1"/>
</dbReference>
<dbReference type="FunFam" id="2.40.50.100:FF:000025">
    <property type="entry name" value="UPF0194 membrane protein YbhG"/>
    <property type="match status" value="1"/>
</dbReference>
<dbReference type="Gene3D" id="2.40.30.170">
    <property type="match status" value="1"/>
</dbReference>
<dbReference type="Gene3D" id="2.40.50.100">
    <property type="match status" value="2"/>
</dbReference>
<dbReference type="Gene3D" id="1.10.287.470">
    <property type="entry name" value="Helix hairpin bin"/>
    <property type="match status" value="1"/>
</dbReference>
<dbReference type="HAMAP" id="MF_01304">
    <property type="entry name" value="UPF0194"/>
    <property type="match status" value="1"/>
</dbReference>
<dbReference type="InterPro" id="IPR032317">
    <property type="entry name" value="CusB_D23"/>
</dbReference>
<dbReference type="InterPro" id="IPR022936">
    <property type="entry name" value="UPF0194_membrane_YbhG"/>
</dbReference>
<dbReference type="InterPro" id="IPR050465">
    <property type="entry name" value="UPF0194_transport"/>
</dbReference>
<dbReference type="NCBIfam" id="NF002939">
    <property type="entry name" value="PRK03598.1"/>
    <property type="match status" value="1"/>
</dbReference>
<dbReference type="PANTHER" id="PTHR32347">
    <property type="entry name" value="EFFLUX SYSTEM COMPONENT YKNX-RELATED"/>
    <property type="match status" value="1"/>
</dbReference>
<dbReference type="PANTHER" id="PTHR32347:SF29">
    <property type="entry name" value="UPF0194 MEMBRANE PROTEIN YBHG"/>
    <property type="match status" value="1"/>
</dbReference>
<dbReference type="Pfam" id="PF16576">
    <property type="entry name" value="HlyD_D23"/>
    <property type="match status" value="1"/>
</dbReference>
<dbReference type="SUPFAM" id="SSF111369">
    <property type="entry name" value="HlyD-like secretion proteins"/>
    <property type="match status" value="2"/>
</dbReference>
<dbReference type="SUPFAM" id="SSF56954">
    <property type="entry name" value="Outer membrane efflux proteins (OEP)"/>
    <property type="match status" value="1"/>
</dbReference>
<feature type="signal peptide" evidence="1">
    <location>
        <begin position="1"/>
        <end position="16"/>
    </location>
</feature>
<feature type="chain" id="PRO_0000088748" description="UPF0194 membrane protein YbhG">
    <location>
        <begin position="17"/>
        <end position="332"/>
    </location>
</feature>
<feature type="coiled-coil region" evidence="1">
    <location>
        <begin position="108"/>
        <end position="210"/>
    </location>
</feature>
<reference key="1">
    <citation type="journal article" date="2001" name="Nature">
        <title>Genome sequence of enterohaemorrhagic Escherichia coli O157:H7.</title>
        <authorList>
            <person name="Perna N.T."/>
            <person name="Plunkett G. III"/>
            <person name="Burland V."/>
            <person name="Mau B."/>
            <person name="Glasner J.D."/>
            <person name="Rose D.J."/>
            <person name="Mayhew G.F."/>
            <person name="Evans P.S."/>
            <person name="Gregor J."/>
            <person name="Kirkpatrick H.A."/>
            <person name="Posfai G."/>
            <person name="Hackett J."/>
            <person name="Klink S."/>
            <person name="Boutin A."/>
            <person name="Shao Y."/>
            <person name="Miller L."/>
            <person name="Grotbeck E.J."/>
            <person name="Davis N.W."/>
            <person name="Lim A."/>
            <person name="Dimalanta E.T."/>
            <person name="Potamousis K."/>
            <person name="Apodaca J."/>
            <person name="Anantharaman T.S."/>
            <person name="Lin J."/>
            <person name="Yen G."/>
            <person name="Schwartz D.C."/>
            <person name="Welch R.A."/>
            <person name="Blattner F.R."/>
        </authorList>
    </citation>
    <scope>NUCLEOTIDE SEQUENCE [LARGE SCALE GENOMIC DNA]</scope>
    <source>
        <strain>O157:H7 / EDL933 / ATCC 700927 / EHEC</strain>
    </source>
</reference>
<reference key="2">
    <citation type="journal article" date="2001" name="DNA Res.">
        <title>Complete genome sequence of enterohemorrhagic Escherichia coli O157:H7 and genomic comparison with a laboratory strain K-12.</title>
        <authorList>
            <person name="Hayashi T."/>
            <person name="Makino K."/>
            <person name="Ohnishi M."/>
            <person name="Kurokawa K."/>
            <person name="Ishii K."/>
            <person name="Yokoyama K."/>
            <person name="Han C.-G."/>
            <person name="Ohtsubo E."/>
            <person name="Nakayama K."/>
            <person name="Murata T."/>
            <person name="Tanaka M."/>
            <person name="Tobe T."/>
            <person name="Iida T."/>
            <person name="Takami H."/>
            <person name="Honda T."/>
            <person name="Sasakawa C."/>
            <person name="Ogasawara N."/>
            <person name="Yasunaga T."/>
            <person name="Kuhara S."/>
            <person name="Shiba T."/>
            <person name="Hattori M."/>
            <person name="Shinagawa H."/>
        </authorList>
    </citation>
    <scope>NUCLEOTIDE SEQUENCE [LARGE SCALE GENOMIC DNA]</scope>
    <source>
        <strain>O157:H7 / Sakai / RIMD 0509952 / EHEC</strain>
    </source>
</reference>
<protein>
    <recommendedName>
        <fullName evidence="1">UPF0194 membrane protein YbhG</fullName>
    </recommendedName>
</protein>
<name>YBHG_ECO57</name>
<accession>Q8X7Y9</accession>
<evidence type="ECO:0000255" key="1">
    <source>
        <dbReference type="HAMAP-Rule" id="MF_01304"/>
    </source>
</evidence>
<evidence type="ECO:0000305" key="2"/>
<sequence>MMKKPVVIGLAVVVLAAVVAGGYWWYQSRQDNGLTLYGNVDIRTVNLSFRVGGRVESLAVDEGDAIKAGQVLGELDHKPYEIALMQAKAGVSVAQAQYDLMLAGYRDEEIAQAAAAVKQAQAAYDYAQNFYNRQQGLWKSRTISANDLENARSSRDQAQATLKSAQDKLRQYRSGNREQDIAQAKASLEQAQAQLAQAELNLQDSTLIAPSDGTLLTRAVEPGTVLNEGGTVFTVSLTRPVWVRAYVDERNLDQAQPGRKVLLYTDGRPDKPYHGQIGFVSPTAEFTPKTVETPDLRTDLVYRLRIVVTDADDALRQGMPVTVQFGDEAGHE</sequence>
<organism>
    <name type="scientific">Escherichia coli O157:H7</name>
    <dbReference type="NCBI Taxonomy" id="83334"/>
    <lineage>
        <taxon>Bacteria</taxon>
        <taxon>Pseudomonadati</taxon>
        <taxon>Pseudomonadota</taxon>
        <taxon>Gammaproteobacteria</taxon>
        <taxon>Enterobacterales</taxon>
        <taxon>Enterobacteriaceae</taxon>
        <taxon>Escherichia</taxon>
    </lineage>
</organism>